<accession>P36507</accession>
<name>MP2K2_HUMAN</name>
<gene>
    <name type="primary">MAP2K2</name>
    <name type="synonym">MEK2</name>
    <name type="synonym">MKK2</name>
    <name type="synonym">PRKMK2</name>
</gene>
<comment type="function">
    <text evidence="3 14">Catalyzes the concomitant phosphorylation of a threonine and a tyrosine residue in a Thr-Glu-Tyr sequence located in MAP kinases. Activates the ERK1 and ERK2 MAP kinases (By similarity). Activates BRAF in a KSR1 or KSR2-dependent manner; by binding to KSR1 or KSR2 releases the inhibitory intramolecular interaction between KSR1 or KSR2 protein kinase and N-terminal domains which promotes KSR1 or KSR2-BRAF dimerization and BRAF activation (PubMed:29433126).</text>
</comment>
<comment type="catalytic activity">
    <reaction evidence="7">
        <text>L-seryl-[protein] + ATP = O-phospho-L-seryl-[protein] + ADP + H(+)</text>
        <dbReference type="Rhea" id="RHEA:17989"/>
        <dbReference type="Rhea" id="RHEA-COMP:9863"/>
        <dbReference type="Rhea" id="RHEA-COMP:11604"/>
        <dbReference type="ChEBI" id="CHEBI:15378"/>
        <dbReference type="ChEBI" id="CHEBI:29999"/>
        <dbReference type="ChEBI" id="CHEBI:30616"/>
        <dbReference type="ChEBI" id="CHEBI:83421"/>
        <dbReference type="ChEBI" id="CHEBI:456216"/>
        <dbReference type="EC" id="2.7.12.2"/>
    </reaction>
</comment>
<comment type="catalytic activity">
    <reaction evidence="7">
        <text>L-threonyl-[protein] + ATP = O-phospho-L-threonyl-[protein] + ADP + H(+)</text>
        <dbReference type="Rhea" id="RHEA:46608"/>
        <dbReference type="Rhea" id="RHEA-COMP:11060"/>
        <dbReference type="Rhea" id="RHEA-COMP:11605"/>
        <dbReference type="ChEBI" id="CHEBI:15378"/>
        <dbReference type="ChEBI" id="CHEBI:30013"/>
        <dbReference type="ChEBI" id="CHEBI:30616"/>
        <dbReference type="ChEBI" id="CHEBI:61977"/>
        <dbReference type="ChEBI" id="CHEBI:456216"/>
        <dbReference type="EC" id="2.7.12.2"/>
    </reaction>
</comment>
<comment type="catalytic activity">
    <reaction evidence="7">
        <text>L-tyrosyl-[protein] + ATP = O-phospho-L-tyrosyl-[protein] + ADP + H(+)</text>
        <dbReference type="Rhea" id="RHEA:10596"/>
        <dbReference type="Rhea" id="RHEA-COMP:10136"/>
        <dbReference type="Rhea" id="RHEA-COMP:20101"/>
        <dbReference type="ChEBI" id="CHEBI:15378"/>
        <dbReference type="ChEBI" id="CHEBI:30616"/>
        <dbReference type="ChEBI" id="CHEBI:46858"/>
        <dbReference type="ChEBI" id="CHEBI:61978"/>
        <dbReference type="ChEBI" id="CHEBI:456216"/>
        <dbReference type="EC" id="2.7.12.2"/>
    </reaction>
</comment>
<comment type="cofactor">
    <cofactor evidence="7">
        <name>Mg(2+)</name>
        <dbReference type="ChEBI" id="CHEBI:18420"/>
    </cofactor>
</comment>
<comment type="subunit">
    <text evidence="3 7 11 13 14">Interacts with MORG1 (By similarity). Interacts with SGK1 (PubMed:19447520). Interacts with KSR1 (PubMed:10409742). Interacts with KSR1 and BRAF; the interaction with KSR1 mediates KSR1-BRAF dimerization (PubMed:29433126). Interacts with GLS (PubMed:22538822).</text>
</comment>
<comment type="interaction">
    <interactant intactId="EBI-1056930">
        <id>P36507</id>
    </interactant>
    <interactant intactId="EBI-77613">
        <id>P05067</id>
        <label>APP</label>
    </interactant>
    <organismsDiffer>false</organismsDiffer>
    <experiments>3</experiments>
</comment>
<comment type="interaction">
    <interactant intactId="EBI-1056930">
        <id>P36507</id>
    </interactant>
    <interactant intactId="EBI-365961">
        <id>P10398</id>
        <label>ARAF</label>
    </interactant>
    <organismsDiffer>false</organismsDiffer>
    <experiments>10</experiments>
</comment>
<comment type="interaction">
    <interactant intactId="EBI-1056930">
        <id>P36507</id>
    </interactant>
    <interactant intactId="EBI-9383168">
        <id>Q96II5</id>
        <label>ARAF</label>
    </interactant>
    <organismsDiffer>false</organismsDiffer>
    <experiments>4</experiments>
</comment>
<comment type="interaction">
    <interactant intactId="EBI-1056930">
        <id>P36507</id>
    </interactant>
    <interactant intactId="EBI-365980">
        <id>P15056</id>
        <label>BRAF</label>
    </interactant>
    <organismsDiffer>false</organismsDiffer>
    <experiments>12</experiments>
</comment>
<comment type="interaction">
    <interactant intactId="EBI-1056930">
        <id>P36507</id>
    </interactant>
    <interactant intactId="EBI-748961">
        <id>O95273</id>
        <label>CCNDBP1</label>
    </interactant>
    <organismsDiffer>false</organismsDiffer>
    <experiments>3</experiments>
</comment>
<comment type="interaction">
    <interactant intactId="EBI-1056930">
        <id>P36507</id>
    </interactant>
    <interactant intactId="EBI-357481">
        <id>Q12959</id>
        <label>DLG1</label>
    </interactant>
    <organismsDiffer>false</organismsDiffer>
    <experiments>10</experiments>
</comment>
<comment type="interaction">
    <interactant intactId="EBI-1056930">
        <id>P36507</id>
    </interactant>
    <interactant intactId="EBI-7060731">
        <id>P61978-2</id>
        <label>HNRNPK</label>
    </interactant>
    <organismsDiffer>false</organismsDiffer>
    <experiments>3</experiments>
</comment>
<comment type="interaction">
    <interactant intactId="EBI-1056930">
        <id>P36507</id>
    </interactant>
    <interactant intactId="EBI-486984">
        <id>Q8IVT5</id>
        <label>KSR1</label>
    </interactant>
    <organismsDiffer>false</organismsDiffer>
    <experiments>10</experiments>
</comment>
<comment type="interaction">
    <interactant intactId="EBI-1056930">
        <id>P36507</id>
    </interactant>
    <interactant intactId="EBI-1757866">
        <id>P00540</id>
        <label>MOS</label>
    </interactant>
    <organismsDiffer>false</organismsDiffer>
    <experiments>3</experiments>
</comment>
<comment type="interaction">
    <interactant intactId="EBI-1056930">
        <id>P36507</id>
    </interactant>
    <interactant intactId="EBI-365996">
        <id>P04049</id>
        <label>RAF1</label>
    </interactant>
    <organismsDiffer>false</organismsDiffer>
    <experiments>7</experiments>
</comment>
<comment type="subcellular location">
    <subcellularLocation>
        <location evidence="7">Cytoplasm</location>
    </subcellularLocation>
    <subcellularLocation>
        <location evidence="7">Membrane</location>
        <topology evidence="7">Peripheral membrane protein</topology>
    </subcellularLocation>
    <text evidence="7">Membrane localization is probably regulated by its interaction with KSR1.</text>
</comment>
<comment type="PTM">
    <text evidence="1">MAPKK is itself dependent on Ser/Thr phosphorylation for activity catalyzed by MAP kinase kinase kinases (RAF or MEKK1). Phosphorylated by MAP2K1/MEK1 (By similarity).</text>
</comment>
<comment type="PTM">
    <text evidence="9 15">(Microbial infection) Acetylation of Ser-222 and Ser-226 by Yersinia YopJ prevents phosphorylation and activation, thus blocking the MAPK signaling pathway.</text>
</comment>
<comment type="disease" evidence="8 10 12">
    <disease id="DI-03781">
        <name>Cardiofaciocutaneous syndrome 4</name>
        <acronym>CFC4</acronym>
        <description>A form of cardiofaciocutaneous syndrome, a multiple congenital anomaly disorder characterized by a distinctive facial appearance, heart defects and intellectual disability. Heart defects include pulmonic stenosis, atrial septal defects and hypertrophic cardiomyopathy. Some affected individuals present with ectodermal abnormalities such as sparse, friable hair, hyperkeratotic skin lesions and a generalized ichthyosis-like condition. Typical facial features are similar to Noonan syndrome. They include high forehead with bitemporal constriction, hypoplastic supraorbital ridges, downslanting palpebral fissures, a depressed nasal bridge, and posteriorly angulated ears with prominent helices.</description>
        <dbReference type="MIM" id="615280"/>
    </disease>
    <text>The disease is caused by variants affecting the gene represented in this entry.</text>
</comment>
<comment type="similarity">
    <text evidence="16">Belongs to the protein kinase superfamily. STE Ser/Thr protein kinase family. MAP kinase kinase subfamily.</text>
</comment>
<evidence type="ECO:0000250" key="1"/>
<evidence type="ECO:0000250" key="2">
    <source>
        <dbReference type="UniProtKB" id="Q02750"/>
    </source>
</evidence>
<evidence type="ECO:0000250" key="3">
    <source>
        <dbReference type="UniProtKB" id="Q63932"/>
    </source>
</evidence>
<evidence type="ECO:0000255" key="4">
    <source>
        <dbReference type="PROSITE-ProRule" id="PRU00159"/>
    </source>
</evidence>
<evidence type="ECO:0000255" key="5">
    <source>
        <dbReference type="PROSITE-ProRule" id="PRU10027"/>
    </source>
</evidence>
<evidence type="ECO:0000256" key="6">
    <source>
        <dbReference type="SAM" id="MobiDB-lite"/>
    </source>
</evidence>
<evidence type="ECO:0000269" key="7">
    <source>
    </source>
</evidence>
<evidence type="ECO:0000269" key="8">
    <source>
    </source>
</evidence>
<evidence type="ECO:0000269" key="9">
    <source>
    </source>
</evidence>
<evidence type="ECO:0000269" key="10">
    <source>
    </source>
</evidence>
<evidence type="ECO:0000269" key="11">
    <source>
    </source>
</evidence>
<evidence type="ECO:0000269" key="12">
    <source>
    </source>
</evidence>
<evidence type="ECO:0000269" key="13">
    <source>
    </source>
</evidence>
<evidence type="ECO:0000269" key="14">
    <source>
    </source>
</evidence>
<evidence type="ECO:0000269" key="15">
    <source ref="3"/>
</evidence>
<evidence type="ECO:0000305" key="16"/>
<evidence type="ECO:0007744" key="17">
    <source>
    </source>
</evidence>
<evidence type="ECO:0007744" key="18">
    <source>
    </source>
</evidence>
<evidence type="ECO:0007744" key="19">
    <source>
    </source>
</evidence>
<evidence type="ECO:0007744" key="20">
    <source>
    </source>
</evidence>
<evidence type="ECO:0007744" key="21">
    <source>
    </source>
</evidence>
<evidence type="ECO:0007744" key="22">
    <source>
    </source>
</evidence>
<evidence type="ECO:0007744" key="23">
    <source>
    </source>
</evidence>
<evidence type="ECO:0007829" key="24">
    <source>
        <dbReference type="PDB" id="1S9I"/>
    </source>
</evidence>
<proteinExistence type="evidence at protein level"/>
<sequence length="400" mass="44424">MLARRKPVLPALTINPTIAEGPSPTSEGASEANLVDLQKKLEELELDEQQKKRLEAFLTQKAKVGELKDDDFERISELGAGNGGVVTKVQHRPSGLIMARKLIHLEIKPAIRNQIIRELQVLHECNSPYIVGFYGAFYSDGEISICMEHMDGGSLDQVLKEAKRIPEEILGKVSIAVLRGLAYLREKHQIMHRDVKPSNILVNSRGEIKLCDFGVSGQLIDSMANSFVGTRSYMAPERLQGTHYSVQSDIWSMGLSLVELAVGRYPIPPPDAKELEAIFGRPVVDGEEGEPHSISPRPRPPGRPVSGHGMDSRPAMAIFELLDYIVNEPPPKLPNGVFTPDFQEFVNKCLIKNPAERADLKMLTNHTFIKRSEVEEVDFAGWLCKTLRLNQPGTPTRTAV</sequence>
<dbReference type="EC" id="2.7.12.2" evidence="7"/>
<dbReference type="EMBL" id="L11285">
    <property type="status" value="NOT_ANNOTATED_CDS"/>
    <property type="molecule type" value="mRNA"/>
</dbReference>
<dbReference type="EMBL" id="BC000471">
    <property type="protein sequence ID" value="AAH00471.1"/>
    <property type="molecule type" value="mRNA"/>
</dbReference>
<dbReference type="EMBL" id="BC018645">
    <property type="protein sequence ID" value="AAH18645.1"/>
    <property type="molecule type" value="mRNA"/>
</dbReference>
<dbReference type="CCDS" id="CCDS12120.1"/>
<dbReference type="PIR" id="A46723">
    <property type="entry name" value="A46723"/>
</dbReference>
<dbReference type="RefSeq" id="NP_109587.1">
    <property type="nucleotide sequence ID" value="NM_030662.4"/>
</dbReference>
<dbReference type="PDB" id="1S9I">
    <property type="method" value="X-ray"/>
    <property type="resolution" value="3.20 A"/>
    <property type="chains" value="A/B=55-400"/>
</dbReference>
<dbReference type="PDB" id="4H3Q">
    <property type="method" value="X-ray"/>
    <property type="resolution" value="2.20 A"/>
    <property type="chains" value="B=4-16"/>
</dbReference>
<dbReference type="PDBsum" id="1S9I"/>
<dbReference type="PDBsum" id="4H3Q"/>
<dbReference type="SMR" id="P36507"/>
<dbReference type="BioGRID" id="111591">
    <property type="interactions" value="333"/>
</dbReference>
<dbReference type="CORUM" id="P36507"/>
<dbReference type="DIP" id="DIP-29119N"/>
<dbReference type="FunCoup" id="P36507">
    <property type="interactions" value="3936"/>
</dbReference>
<dbReference type="IntAct" id="P36507">
    <property type="interactions" value="227"/>
</dbReference>
<dbReference type="MINT" id="P36507"/>
<dbReference type="STRING" id="9606.ENSP00000262948"/>
<dbReference type="BindingDB" id="P36507"/>
<dbReference type="ChEMBL" id="CHEMBL2964"/>
<dbReference type="DrugBank" id="DB11967">
    <property type="generic name" value="Binimetinib"/>
</dbReference>
<dbReference type="DrugBank" id="DB06616">
    <property type="generic name" value="Bosutinib"/>
</dbReference>
<dbReference type="DrugBank" id="DB12010">
    <property type="generic name" value="Fostamatinib"/>
</dbReference>
<dbReference type="DrugBank" id="DB17042">
    <property type="generic name" value="PD-98059"/>
</dbReference>
<dbReference type="DrugBank" id="DB14904">
    <property type="generic name" value="Pimasertib"/>
</dbReference>
<dbReference type="DrugBank" id="DB11689">
    <property type="generic name" value="Selumetinib"/>
</dbReference>
<dbReference type="DrugBank" id="DB08911">
    <property type="generic name" value="Trametinib"/>
</dbReference>
<dbReference type="DrugCentral" id="P36507"/>
<dbReference type="GuidetoPHARMACOLOGY" id="2063"/>
<dbReference type="GlyCosmos" id="P36507">
    <property type="glycosylation" value="2 sites, 1 glycan"/>
</dbReference>
<dbReference type="GlyGen" id="P36507">
    <property type="glycosylation" value="6 sites, 1 O-linked glycan (5 sites)"/>
</dbReference>
<dbReference type="iPTMnet" id="P36507"/>
<dbReference type="MetOSite" id="P36507"/>
<dbReference type="PhosphoSitePlus" id="P36507"/>
<dbReference type="SwissPalm" id="P36507"/>
<dbReference type="BioMuta" id="MAP2K2"/>
<dbReference type="DMDM" id="547915"/>
<dbReference type="REPRODUCTION-2DPAGE" id="IPI00003783"/>
<dbReference type="CPTAC" id="CPTAC-1045"/>
<dbReference type="CPTAC" id="CPTAC-1543"/>
<dbReference type="CPTAC" id="CPTAC-811"/>
<dbReference type="CPTAC" id="CPTAC-812"/>
<dbReference type="CPTAC" id="CPTAC-813"/>
<dbReference type="jPOST" id="P36507"/>
<dbReference type="MassIVE" id="P36507"/>
<dbReference type="PaxDb" id="9606-ENSP00000262948"/>
<dbReference type="PeptideAtlas" id="P36507"/>
<dbReference type="ProteomicsDB" id="55203"/>
<dbReference type="Pumba" id="P36507"/>
<dbReference type="Antibodypedia" id="3543">
    <property type="antibodies" value="1448 antibodies from 50 providers"/>
</dbReference>
<dbReference type="CPTC" id="P36507">
    <property type="antibodies" value="1 antibody"/>
</dbReference>
<dbReference type="DNASU" id="5605"/>
<dbReference type="Ensembl" id="ENST00000262948.10">
    <property type="protein sequence ID" value="ENSP00000262948.4"/>
    <property type="gene ID" value="ENSG00000126934.15"/>
</dbReference>
<dbReference type="GeneID" id="5605"/>
<dbReference type="KEGG" id="hsa:5605"/>
<dbReference type="MANE-Select" id="ENST00000262948.10">
    <property type="protein sequence ID" value="ENSP00000262948.4"/>
    <property type="RefSeq nucleotide sequence ID" value="NM_030662.4"/>
    <property type="RefSeq protein sequence ID" value="NP_109587.1"/>
</dbReference>
<dbReference type="UCSC" id="uc002lzk.4">
    <property type="organism name" value="human"/>
</dbReference>
<dbReference type="AGR" id="HGNC:6842"/>
<dbReference type="CTD" id="5605"/>
<dbReference type="DisGeNET" id="5605"/>
<dbReference type="GeneCards" id="MAP2K2"/>
<dbReference type="GeneReviews" id="MAP2K2"/>
<dbReference type="HGNC" id="HGNC:6842">
    <property type="gene designation" value="MAP2K2"/>
</dbReference>
<dbReference type="HPA" id="ENSG00000126934">
    <property type="expression patterns" value="Tissue enhanced (skeletal)"/>
</dbReference>
<dbReference type="MalaCards" id="MAP2K2"/>
<dbReference type="MIM" id="601263">
    <property type="type" value="gene"/>
</dbReference>
<dbReference type="MIM" id="615280">
    <property type="type" value="phenotype"/>
</dbReference>
<dbReference type="neXtProt" id="NX_P36507"/>
<dbReference type="OpenTargets" id="ENSG00000126934"/>
<dbReference type="Orphanet" id="1340">
    <property type="disease" value="Cardiofaciocutaneous syndrome"/>
</dbReference>
<dbReference type="Orphanet" id="638">
    <property type="disease" value="Neurofibromatosis-Noonan syndrome"/>
</dbReference>
<dbReference type="PharmGKB" id="PA30587"/>
<dbReference type="VEuPathDB" id="HostDB:ENSG00000126934"/>
<dbReference type="eggNOG" id="KOG0581">
    <property type="taxonomic scope" value="Eukaryota"/>
</dbReference>
<dbReference type="GeneTree" id="ENSGT00940000153487"/>
<dbReference type="InParanoid" id="P36507"/>
<dbReference type="OMA" id="QMTLTEP"/>
<dbReference type="OrthoDB" id="10252354at2759"/>
<dbReference type="PAN-GO" id="P36507">
    <property type="GO annotations" value="2 GO annotations based on evolutionary models"/>
</dbReference>
<dbReference type="PhylomeDB" id="P36507"/>
<dbReference type="TreeFam" id="TF105137"/>
<dbReference type="BRENDA" id="2.7.12.2">
    <property type="organism ID" value="2681"/>
</dbReference>
<dbReference type="PathwayCommons" id="P36507"/>
<dbReference type="Reactome" id="R-HSA-112411">
    <property type="pathway name" value="MAPK1 (ERK2) activation"/>
</dbReference>
<dbReference type="Reactome" id="R-HSA-170968">
    <property type="pathway name" value="Frs2-mediated activation"/>
</dbReference>
<dbReference type="Reactome" id="R-HSA-445144">
    <property type="pathway name" value="Signal transduction by L1"/>
</dbReference>
<dbReference type="Reactome" id="R-HSA-5210891">
    <property type="pathway name" value="Uptake and function of anthrax toxins"/>
</dbReference>
<dbReference type="Reactome" id="R-HSA-5673000">
    <property type="pathway name" value="RAF activation"/>
</dbReference>
<dbReference type="Reactome" id="R-HSA-5674135">
    <property type="pathway name" value="MAP2K and MAPK activation"/>
</dbReference>
<dbReference type="Reactome" id="R-HSA-5674499">
    <property type="pathway name" value="Negative feedback regulation of MAPK pathway"/>
</dbReference>
<dbReference type="Reactome" id="R-HSA-6802946">
    <property type="pathway name" value="Signaling by moderate kinase activity BRAF mutants"/>
</dbReference>
<dbReference type="Reactome" id="R-HSA-6802948">
    <property type="pathway name" value="Signaling by high-kinase activity BRAF mutants"/>
</dbReference>
<dbReference type="Reactome" id="R-HSA-6802952">
    <property type="pathway name" value="Signaling by BRAF and RAF1 fusions"/>
</dbReference>
<dbReference type="Reactome" id="R-HSA-6802955">
    <property type="pathway name" value="Paradoxical activation of RAF signaling by kinase inactive BRAF"/>
</dbReference>
<dbReference type="Reactome" id="R-HSA-9649948">
    <property type="pathway name" value="Signaling downstream of RAS mutants"/>
</dbReference>
<dbReference type="Reactome" id="R-HSA-9652169">
    <property type="pathway name" value="Signaling by MAP2K mutants"/>
</dbReference>
<dbReference type="Reactome" id="R-HSA-9656223">
    <property type="pathway name" value="Signaling by RAF1 mutants"/>
</dbReference>
<dbReference type="SignaLink" id="P36507"/>
<dbReference type="SIGNOR" id="P36507"/>
<dbReference type="BioGRID-ORCS" id="5605">
    <property type="hits" value="27 hits in 1195 CRISPR screens"/>
</dbReference>
<dbReference type="CD-CODE" id="8C2F96ED">
    <property type="entry name" value="Centrosome"/>
</dbReference>
<dbReference type="CD-CODE" id="FB4E32DD">
    <property type="entry name" value="Presynaptic clusters and postsynaptic densities"/>
</dbReference>
<dbReference type="ChiTaRS" id="MAP2K2">
    <property type="organism name" value="human"/>
</dbReference>
<dbReference type="EvolutionaryTrace" id="P36507"/>
<dbReference type="GeneWiki" id="MAP2K2"/>
<dbReference type="GenomeRNAi" id="5605"/>
<dbReference type="Pharos" id="P36507">
    <property type="development level" value="Tclin"/>
</dbReference>
<dbReference type="PRO" id="PR:P36507"/>
<dbReference type="Proteomes" id="UP000005640">
    <property type="component" value="Chromosome 19"/>
</dbReference>
<dbReference type="RNAct" id="P36507">
    <property type="molecule type" value="protein"/>
</dbReference>
<dbReference type="Bgee" id="ENSG00000126934">
    <property type="expression patterns" value="Expressed in mucosa of transverse colon and 202 other cell types or tissues"/>
</dbReference>
<dbReference type="ExpressionAtlas" id="P36507">
    <property type="expression patterns" value="baseline and differential"/>
</dbReference>
<dbReference type="GO" id="GO:0005911">
    <property type="term" value="C:cell-cell junction"/>
    <property type="evidence" value="ECO:0000314"/>
    <property type="project" value="UniProtKB"/>
</dbReference>
<dbReference type="GO" id="GO:0009898">
    <property type="term" value="C:cytoplasmic side of plasma membrane"/>
    <property type="evidence" value="ECO:0000314"/>
    <property type="project" value="UniProtKB"/>
</dbReference>
<dbReference type="GO" id="GO:0005829">
    <property type="term" value="C:cytosol"/>
    <property type="evidence" value="ECO:0000314"/>
    <property type="project" value="HPA"/>
</dbReference>
<dbReference type="GO" id="GO:0005769">
    <property type="term" value="C:early endosome"/>
    <property type="evidence" value="ECO:0000304"/>
    <property type="project" value="UniProtKB"/>
</dbReference>
<dbReference type="GO" id="GO:0005783">
    <property type="term" value="C:endoplasmic reticulum"/>
    <property type="evidence" value="ECO:0000314"/>
    <property type="project" value="UniProtKB"/>
</dbReference>
<dbReference type="GO" id="GO:0005576">
    <property type="term" value="C:extracellular region"/>
    <property type="evidence" value="ECO:0000303"/>
    <property type="project" value="UniProtKB"/>
</dbReference>
<dbReference type="GO" id="GO:0005925">
    <property type="term" value="C:focal adhesion"/>
    <property type="evidence" value="ECO:0000304"/>
    <property type="project" value="UniProtKB"/>
</dbReference>
<dbReference type="GO" id="GO:0005794">
    <property type="term" value="C:Golgi apparatus"/>
    <property type="evidence" value="ECO:0000314"/>
    <property type="project" value="UniProtKB"/>
</dbReference>
<dbReference type="GO" id="GO:0005770">
    <property type="term" value="C:late endosome"/>
    <property type="evidence" value="ECO:0000304"/>
    <property type="project" value="UniProtKB"/>
</dbReference>
<dbReference type="GO" id="GO:0005874">
    <property type="term" value="C:microtubule"/>
    <property type="evidence" value="ECO:0000314"/>
    <property type="project" value="UniProtKB"/>
</dbReference>
<dbReference type="GO" id="GO:0005739">
    <property type="term" value="C:mitochondrion"/>
    <property type="evidence" value="ECO:0000304"/>
    <property type="project" value="UniProtKB"/>
</dbReference>
<dbReference type="GO" id="GO:0005634">
    <property type="term" value="C:nucleus"/>
    <property type="evidence" value="ECO:0000304"/>
    <property type="project" value="UniProtKB"/>
</dbReference>
<dbReference type="GO" id="GO:0048471">
    <property type="term" value="C:perinuclear region of cytoplasm"/>
    <property type="evidence" value="ECO:0000314"/>
    <property type="project" value="UniProtKB"/>
</dbReference>
<dbReference type="GO" id="GO:0005778">
    <property type="term" value="C:peroxisomal membrane"/>
    <property type="evidence" value="ECO:0007005"/>
    <property type="project" value="UniProtKB"/>
</dbReference>
<dbReference type="GO" id="GO:0005524">
    <property type="term" value="F:ATP binding"/>
    <property type="evidence" value="ECO:0007669"/>
    <property type="project" value="UniProtKB-KW"/>
</dbReference>
<dbReference type="GO" id="GO:0004708">
    <property type="term" value="F:MAP kinase kinase activity"/>
    <property type="evidence" value="ECO:0000314"/>
    <property type="project" value="UniProtKB"/>
</dbReference>
<dbReference type="GO" id="GO:0005078">
    <property type="term" value="F:MAP-kinase scaffold activity"/>
    <property type="evidence" value="ECO:0000315"/>
    <property type="project" value="UniProtKB"/>
</dbReference>
<dbReference type="GO" id="GO:0046872">
    <property type="term" value="F:metal ion binding"/>
    <property type="evidence" value="ECO:0007669"/>
    <property type="project" value="UniProtKB-KW"/>
</dbReference>
<dbReference type="GO" id="GO:0030165">
    <property type="term" value="F:PDZ domain binding"/>
    <property type="evidence" value="ECO:0000314"/>
    <property type="project" value="UniProtKB"/>
</dbReference>
<dbReference type="GO" id="GO:0106310">
    <property type="term" value="F:protein serine kinase activity"/>
    <property type="evidence" value="ECO:0007669"/>
    <property type="project" value="RHEA"/>
</dbReference>
<dbReference type="GO" id="GO:0043539">
    <property type="term" value="F:protein serine/threonine kinase activator activity"/>
    <property type="evidence" value="ECO:0000314"/>
    <property type="project" value="UniProtKB"/>
</dbReference>
<dbReference type="GO" id="GO:0004674">
    <property type="term" value="F:protein serine/threonine kinase activity"/>
    <property type="evidence" value="ECO:0000304"/>
    <property type="project" value="Reactome"/>
</dbReference>
<dbReference type="GO" id="GO:0004712">
    <property type="term" value="F:protein serine/threonine/tyrosine kinase activity"/>
    <property type="evidence" value="ECO:0000304"/>
    <property type="project" value="UniProtKB"/>
</dbReference>
<dbReference type="GO" id="GO:0004713">
    <property type="term" value="F:protein tyrosine kinase activity"/>
    <property type="evidence" value="ECO:0007669"/>
    <property type="project" value="UniProtKB-KW"/>
</dbReference>
<dbReference type="GO" id="GO:0097110">
    <property type="term" value="F:scaffold protein binding"/>
    <property type="evidence" value="ECO:0000353"/>
    <property type="project" value="UniProtKB"/>
</dbReference>
<dbReference type="GO" id="GO:0060502">
    <property type="term" value="P:epithelial cell proliferation involved in lung morphogenesis"/>
    <property type="evidence" value="ECO:0007669"/>
    <property type="project" value="Ensembl"/>
</dbReference>
<dbReference type="GO" id="GO:0038133">
    <property type="term" value="P:ERBB2-ERBB3 signaling pathway"/>
    <property type="evidence" value="ECO:0007669"/>
    <property type="project" value="Ensembl"/>
</dbReference>
<dbReference type="GO" id="GO:0070371">
    <property type="term" value="P:ERK1 and ERK2 cascade"/>
    <property type="evidence" value="ECO:0000315"/>
    <property type="project" value="BHF-UCL"/>
</dbReference>
<dbReference type="GO" id="GO:0060324">
    <property type="term" value="P:face development"/>
    <property type="evidence" value="ECO:0007669"/>
    <property type="project" value="Ensembl"/>
</dbReference>
<dbReference type="GO" id="GO:0007507">
    <property type="term" value="P:heart development"/>
    <property type="evidence" value="ECO:0007669"/>
    <property type="project" value="Ensembl"/>
</dbReference>
<dbReference type="GO" id="GO:0048009">
    <property type="term" value="P:insulin-like growth factor receptor signaling pathway"/>
    <property type="evidence" value="ECO:0007669"/>
    <property type="project" value="Ensembl"/>
</dbReference>
<dbReference type="GO" id="GO:0000165">
    <property type="term" value="P:MAPK cascade"/>
    <property type="evidence" value="ECO:0000318"/>
    <property type="project" value="GO_Central"/>
</dbReference>
<dbReference type="GO" id="GO:0042552">
    <property type="term" value="P:myelination"/>
    <property type="evidence" value="ECO:0007669"/>
    <property type="project" value="Ensembl"/>
</dbReference>
<dbReference type="GO" id="GO:0036289">
    <property type="term" value="P:peptidyl-serine autophosphorylation"/>
    <property type="evidence" value="ECO:0000314"/>
    <property type="project" value="UniProtKB"/>
</dbReference>
<dbReference type="GO" id="GO:0050772">
    <property type="term" value="P:positive regulation of axonogenesis"/>
    <property type="evidence" value="ECO:0007669"/>
    <property type="project" value="Ensembl"/>
</dbReference>
<dbReference type="GO" id="GO:2000147">
    <property type="term" value="P:positive regulation of cell motility"/>
    <property type="evidence" value="ECO:0007669"/>
    <property type="project" value="Ensembl"/>
</dbReference>
<dbReference type="GO" id="GO:0045893">
    <property type="term" value="P:positive regulation of DNA-templated transcription"/>
    <property type="evidence" value="ECO:0000315"/>
    <property type="project" value="BHF-UCL"/>
</dbReference>
<dbReference type="GO" id="GO:0010628">
    <property type="term" value="P:positive regulation of gene expression"/>
    <property type="evidence" value="ECO:0000315"/>
    <property type="project" value="BHF-UCL"/>
</dbReference>
<dbReference type="GO" id="GO:0071902">
    <property type="term" value="P:positive regulation of protein serine/threonine kinase activity"/>
    <property type="evidence" value="ECO:0000314"/>
    <property type="project" value="UniProtKB"/>
</dbReference>
<dbReference type="GO" id="GO:0048679">
    <property type="term" value="P:regulation of axon regeneration"/>
    <property type="evidence" value="ECO:0007669"/>
    <property type="project" value="Ensembl"/>
</dbReference>
<dbReference type="GO" id="GO:2000641">
    <property type="term" value="P:regulation of early endosome to late endosome transport"/>
    <property type="evidence" value="ECO:0000304"/>
    <property type="project" value="UniProtKB"/>
</dbReference>
<dbReference type="GO" id="GO:0090170">
    <property type="term" value="P:regulation of Golgi inheritance"/>
    <property type="evidence" value="ECO:0000304"/>
    <property type="project" value="UniProtKB"/>
</dbReference>
<dbReference type="GO" id="GO:0032872">
    <property type="term" value="P:regulation of stress-activated MAPK cascade"/>
    <property type="evidence" value="ECO:0000304"/>
    <property type="project" value="UniProtKB"/>
</dbReference>
<dbReference type="GO" id="GO:0014044">
    <property type="term" value="P:Schwann cell development"/>
    <property type="evidence" value="ECO:0007669"/>
    <property type="project" value="Ensembl"/>
</dbReference>
<dbReference type="GO" id="GO:0048538">
    <property type="term" value="P:thymus development"/>
    <property type="evidence" value="ECO:0007669"/>
    <property type="project" value="Ensembl"/>
</dbReference>
<dbReference type="GO" id="GO:0030878">
    <property type="term" value="P:thyroid gland development"/>
    <property type="evidence" value="ECO:0007669"/>
    <property type="project" value="Ensembl"/>
</dbReference>
<dbReference type="GO" id="GO:0060440">
    <property type="term" value="P:trachea formation"/>
    <property type="evidence" value="ECO:0007669"/>
    <property type="project" value="Ensembl"/>
</dbReference>
<dbReference type="CDD" id="cd06649">
    <property type="entry name" value="PKc_MEK2"/>
    <property type="match status" value="1"/>
</dbReference>
<dbReference type="FunFam" id="1.10.510.10:FF:000115">
    <property type="entry name" value="Dual specificity mitogen-activated protein kinase kinase 1"/>
    <property type="match status" value="1"/>
</dbReference>
<dbReference type="FunFam" id="3.30.200.20:FF:000100">
    <property type="entry name" value="Dual specificity mitogen-activated protein kinase kinase 1"/>
    <property type="match status" value="1"/>
</dbReference>
<dbReference type="Gene3D" id="3.30.200.20">
    <property type="entry name" value="Phosphorylase Kinase, domain 1"/>
    <property type="match status" value="1"/>
</dbReference>
<dbReference type="Gene3D" id="1.10.510.10">
    <property type="entry name" value="Transferase(Phosphotransferase) domain 1"/>
    <property type="match status" value="1"/>
</dbReference>
<dbReference type="InterPro" id="IPR011009">
    <property type="entry name" value="Kinase-like_dom_sf"/>
</dbReference>
<dbReference type="InterPro" id="IPR050915">
    <property type="entry name" value="MAP_kinase_kinase"/>
</dbReference>
<dbReference type="InterPro" id="IPR000719">
    <property type="entry name" value="Prot_kinase_dom"/>
</dbReference>
<dbReference type="InterPro" id="IPR017441">
    <property type="entry name" value="Protein_kinase_ATP_BS"/>
</dbReference>
<dbReference type="InterPro" id="IPR008271">
    <property type="entry name" value="Ser/Thr_kinase_AS"/>
</dbReference>
<dbReference type="PANTHER" id="PTHR47448">
    <property type="entry name" value="DUAL SPECIFICITY MITOGEN-ACTIVATED PROTEIN KINASE KINASE DSOR1-LIKE PROTEIN"/>
    <property type="match status" value="1"/>
</dbReference>
<dbReference type="PANTHER" id="PTHR47448:SF3">
    <property type="entry name" value="MITOGEN-ACTIVATED PROTEIN KINASE KINASE 2"/>
    <property type="match status" value="1"/>
</dbReference>
<dbReference type="Pfam" id="PF00069">
    <property type="entry name" value="Pkinase"/>
    <property type="match status" value="1"/>
</dbReference>
<dbReference type="SMART" id="SM00220">
    <property type="entry name" value="S_TKc"/>
    <property type="match status" value="1"/>
</dbReference>
<dbReference type="SUPFAM" id="SSF56112">
    <property type="entry name" value="Protein kinase-like (PK-like)"/>
    <property type="match status" value="1"/>
</dbReference>
<dbReference type="PROSITE" id="PS00107">
    <property type="entry name" value="PROTEIN_KINASE_ATP"/>
    <property type="match status" value="1"/>
</dbReference>
<dbReference type="PROSITE" id="PS50011">
    <property type="entry name" value="PROTEIN_KINASE_DOM"/>
    <property type="match status" value="1"/>
</dbReference>
<dbReference type="PROSITE" id="PS00108">
    <property type="entry name" value="PROTEIN_KINASE_ST"/>
    <property type="match status" value="1"/>
</dbReference>
<keyword id="KW-0002">3D-structure</keyword>
<keyword id="KW-0007">Acetylation</keyword>
<keyword id="KW-0067">ATP-binding</keyword>
<keyword id="KW-0122">Cardiomyopathy</keyword>
<keyword id="KW-0963">Cytoplasm</keyword>
<keyword id="KW-0903">Direct protein sequencing</keyword>
<keyword id="KW-0225">Disease variant</keyword>
<keyword id="KW-0038">Ectodermal dysplasia</keyword>
<keyword id="KW-0991">Intellectual disability</keyword>
<keyword id="KW-0418">Kinase</keyword>
<keyword id="KW-0460">Magnesium</keyword>
<keyword id="KW-0472">Membrane</keyword>
<keyword id="KW-0479">Metal-binding</keyword>
<keyword id="KW-0547">Nucleotide-binding</keyword>
<keyword id="KW-0597">Phosphoprotein</keyword>
<keyword id="KW-1267">Proteomics identification</keyword>
<keyword id="KW-1185">Reference proteome</keyword>
<keyword id="KW-0723">Serine/threonine-protein kinase</keyword>
<keyword id="KW-0808">Transferase</keyword>
<keyword id="KW-0829">Tyrosine-protein kinase</keyword>
<protein>
    <recommendedName>
        <fullName>Dual specificity mitogen-activated protein kinase kinase 2</fullName>
        <shortName>MAP kinase kinase 2</shortName>
        <shortName>MAPKK 2</shortName>
        <ecNumber evidence="7">2.7.12.2</ecNumber>
    </recommendedName>
    <alternativeName>
        <fullName>ERK activator kinase 2</fullName>
    </alternativeName>
    <alternativeName>
        <fullName>MAPK/ERK kinase 2</fullName>
        <shortName>MEK 2</shortName>
    </alternativeName>
</protein>
<reference key="1">
    <citation type="journal article" date="1993" name="J. Biol. Chem.">
        <title>Cloning and characterization of two distinct human extracellular signal-regulated kinase activator kinases, MEK1 and MEK2.</title>
        <authorList>
            <person name="Zheng C.-F."/>
            <person name="Guan K.-L."/>
        </authorList>
    </citation>
    <scope>NUCLEOTIDE SEQUENCE [MRNA]</scope>
</reference>
<reference key="2">
    <citation type="journal article" date="2004" name="Genome Res.">
        <title>The status, quality, and expansion of the NIH full-length cDNA project: the Mammalian Gene Collection (MGC).</title>
        <authorList>
            <consortium name="The MGC Project Team"/>
        </authorList>
    </citation>
    <scope>NUCLEOTIDE SEQUENCE [LARGE SCALE MRNA]</scope>
    <source>
        <tissue>Muscle</tissue>
        <tissue>Skin</tissue>
    </source>
</reference>
<reference key="3">
    <citation type="submission" date="2008-12" db="UniProtKB">
        <authorList>
            <person name="Bienvenut W.V."/>
            <person name="Zebisch A."/>
            <person name="Kolch W."/>
        </authorList>
    </citation>
    <scope>PROTEIN SEQUENCE OF 40-51; 53-61; 64-100; 102-112; 164-172; 194-205; 265-297; 362-371 AND 389-397</scope>
    <scope>PHOSPHORYLATION AT THR-394</scope>
    <scope>IDENTIFICATION BY MASS SPECTROMETRY</scope>
    <source>
        <tissue>Colon carcinoma</tissue>
    </source>
</reference>
<reference key="4">
    <citation type="journal article" date="2006" name="Proc. Natl. Acad. Sci. U.S.A.">
        <title>Acetylation of MEK2 and I kappa B kinase (IKK) activation loop residues by YopJ inhibits signaling.</title>
        <authorList>
            <person name="Mittal R."/>
            <person name="Peak-Chew S.Y."/>
            <person name="McMahon H.T."/>
        </authorList>
    </citation>
    <scope>PROTEIN SEQUENCE OF 210-231</scope>
    <scope>INACTIVATION BY YERSINIA YOPJ (MICROBIAL INFECTION)</scope>
    <scope>PHOSPHORYLATION AT SER-222 AND SER-226</scope>
    <scope>ACETYLATION AT SER-222 AND SER-226</scope>
    <scope>IDENTIFICATION BY MASS SPECTROMETRY</scope>
</reference>
<reference key="5">
    <citation type="journal article" date="1998" name="Science">
        <title>Proteolytic inactivation of MAP-kinase-kinase by anthrax lethal factor.</title>
        <authorList>
            <person name="Duesbery N.S."/>
            <person name="Webb C.P."/>
            <person name="Leppla S.H."/>
            <person name="Gordon V.M."/>
            <person name="Klimpel K.R."/>
            <person name="Copeland T.D."/>
            <person name="Ahn N.G."/>
            <person name="Oskarsson M.K."/>
            <person name="Fukasawa K."/>
            <person name="Paull K.D."/>
            <person name="Vande Woude G.F."/>
        </authorList>
    </citation>
    <scope>CLEAVAGE BY ANTHRAX LETHAL FACTOR</scope>
</reference>
<reference key="6">
    <citation type="journal article" date="1999" name="Mol. Cell. Biol.">
        <title>Kinase suppressor of Ras forms a multiprotein signaling complex and modulates MEK localization.</title>
        <authorList>
            <person name="Stewart S."/>
            <person name="Sundaram M."/>
            <person name="Zhang Y."/>
            <person name="Lee J."/>
            <person name="Han M."/>
            <person name="Guan K.L."/>
        </authorList>
    </citation>
    <scope>PROTEIN SEQUENCE OF 39-49; 52-61 AND 352-361</scope>
    <scope>CATALYTIC ACTIVITY</scope>
    <scope>COFACTOR</scope>
    <scope>INTERACTION WITH KSR1</scope>
    <scope>SUBCELLULAR LOCATION</scope>
    <scope>PHOSPHORYLATION AT SER-222</scope>
</reference>
<reference key="7">
    <citation type="journal article" date="2000" name="Biochem. J.">
        <title>Susceptibility of mitogen-activated protein kinase kinase family members to proteolysis by anthrax lethal factor.</title>
        <authorList>
            <person name="Vitale G."/>
            <person name="Bernardi L."/>
            <person name="Napolitani G."/>
            <person name="Mock M."/>
            <person name="Montecucco C."/>
        </authorList>
    </citation>
    <scope>CLEAVAGE BY ANTHRAX LETHAL FACTOR</scope>
</reference>
<reference key="8">
    <citation type="journal article" date="2006" name="Cell">
        <title>Global, in vivo, and site-specific phosphorylation dynamics in signaling networks.</title>
        <authorList>
            <person name="Olsen J.V."/>
            <person name="Blagoev B."/>
            <person name="Gnad F."/>
            <person name="Macek B."/>
            <person name="Kumar C."/>
            <person name="Mortensen P."/>
            <person name="Mann M."/>
        </authorList>
    </citation>
    <scope>IDENTIFICATION BY MASS SPECTROMETRY [LARGE SCALE ANALYSIS]</scope>
    <source>
        <tissue>Cervix carcinoma</tissue>
    </source>
</reference>
<reference key="9">
    <citation type="journal article" date="2008" name="J. Proteome Res.">
        <title>Phosphoproteome of resting human platelets.</title>
        <authorList>
            <person name="Zahedi R.P."/>
            <person name="Lewandrowski U."/>
            <person name="Wiesner J."/>
            <person name="Wortelkamp S."/>
            <person name="Moebius J."/>
            <person name="Schuetz C."/>
            <person name="Walter U."/>
            <person name="Gambaryan S."/>
            <person name="Sickmann A."/>
        </authorList>
    </citation>
    <scope>IDENTIFICATION BY MASS SPECTROMETRY [LARGE SCALE ANALYSIS]</scope>
    <source>
        <tissue>Platelet</tissue>
    </source>
</reference>
<reference key="10">
    <citation type="journal article" date="2008" name="Mol. Cell">
        <title>Kinase-selective enrichment enables quantitative phosphoproteomics of the kinome across the cell cycle.</title>
        <authorList>
            <person name="Daub H."/>
            <person name="Olsen J.V."/>
            <person name="Bairlein M."/>
            <person name="Gnad F."/>
            <person name="Oppermann F.S."/>
            <person name="Korner R."/>
            <person name="Greff Z."/>
            <person name="Keri G."/>
            <person name="Stemmann O."/>
            <person name="Mann M."/>
        </authorList>
    </citation>
    <scope>PHOSPHORYLATION [LARGE SCALE ANALYSIS] AT SER-293 AND SER-295</scope>
    <scope>IDENTIFICATION BY MASS SPECTROMETRY [LARGE SCALE ANALYSIS]</scope>
    <source>
        <tissue>Cervix carcinoma</tissue>
    </source>
</reference>
<reference key="11">
    <citation type="journal article" date="2008" name="Proc. Natl. Acad. Sci. U.S.A.">
        <title>A quantitative atlas of mitotic phosphorylation.</title>
        <authorList>
            <person name="Dephoure N."/>
            <person name="Zhou C."/>
            <person name="Villen J."/>
            <person name="Beausoleil S.A."/>
            <person name="Bakalarski C.E."/>
            <person name="Elledge S.J."/>
            <person name="Gygi S.P."/>
        </authorList>
    </citation>
    <scope>PHOSPHORYLATION [LARGE SCALE ANALYSIS] AT THR-394 AND THR-396</scope>
    <scope>IDENTIFICATION BY MASS SPECTROMETRY [LARGE SCALE ANALYSIS]</scope>
    <source>
        <tissue>Cervix carcinoma</tissue>
    </source>
</reference>
<reference key="12">
    <citation type="journal article" date="2009" name="Anal. Chem.">
        <title>Lys-N and trypsin cover complementary parts of the phosphoproteome in a refined SCX-based approach.</title>
        <authorList>
            <person name="Gauci S."/>
            <person name="Helbig A.O."/>
            <person name="Slijper M."/>
            <person name="Krijgsveld J."/>
            <person name="Heck A.J."/>
            <person name="Mohammed S."/>
        </authorList>
    </citation>
    <scope>ACETYLATION [LARGE SCALE ANALYSIS] AT MET-1</scope>
    <scope>IDENTIFICATION BY MASS SPECTROMETRY [LARGE SCALE ANALYSIS]</scope>
</reference>
<reference key="13">
    <citation type="journal article" date="2009" name="J. Hepatol.">
        <title>Protein kinase SGK1 enhances MEK/ERK complex formation through the phosphorylation of ERK2: implication for the positive regulatory role of SGK1 on the ERK function during liver regeneration.</title>
        <authorList>
            <person name="Won M."/>
            <person name="Park K.A."/>
            <person name="Byun H.S."/>
            <person name="Kim Y.R."/>
            <person name="Choi B.L."/>
            <person name="Hong J.H."/>
            <person name="Park J."/>
            <person name="Seok J.H."/>
            <person name="Lee Y.H."/>
            <person name="Cho C.H."/>
            <person name="Song I.S."/>
            <person name="Kim Y.K."/>
            <person name="Shen H.M."/>
            <person name="Hur G.M."/>
        </authorList>
    </citation>
    <scope>INTERACTION WITH SGK1</scope>
</reference>
<reference key="14">
    <citation type="journal article" date="2009" name="Mol. Cell. Proteomics">
        <title>Large-scale proteomics analysis of the human kinome.</title>
        <authorList>
            <person name="Oppermann F.S."/>
            <person name="Gnad F."/>
            <person name="Olsen J.V."/>
            <person name="Hornberger R."/>
            <person name="Greff Z."/>
            <person name="Keri G."/>
            <person name="Mann M."/>
            <person name="Daub H."/>
        </authorList>
    </citation>
    <scope>IDENTIFICATION BY MASS SPECTROMETRY [LARGE SCALE ANALYSIS]</scope>
</reference>
<reference key="15">
    <citation type="journal article" date="2009" name="Sci. Signal.">
        <title>Quantitative phosphoproteomic analysis of T cell receptor signaling reveals system-wide modulation of protein-protein interactions.</title>
        <authorList>
            <person name="Mayya V."/>
            <person name="Lundgren D.H."/>
            <person name="Hwang S.-I."/>
            <person name="Rezaul K."/>
            <person name="Wu L."/>
            <person name="Eng J.K."/>
            <person name="Rodionov V."/>
            <person name="Han D.K."/>
        </authorList>
    </citation>
    <scope>IDENTIFICATION BY MASS SPECTROMETRY [LARGE SCALE ANALYSIS]</scope>
    <source>
        <tissue>Leukemic T-cell</tissue>
    </source>
</reference>
<reference key="16">
    <citation type="journal article" date="2010" name="Sci. Signal.">
        <title>Quantitative phosphoproteomics reveals widespread full phosphorylation site occupancy during mitosis.</title>
        <authorList>
            <person name="Olsen J.V."/>
            <person name="Vermeulen M."/>
            <person name="Santamaria A."/>
            <person name="Kumar C."/>
            <person name="Miller M.L."/>
            <person name="Jensen L.J."/>
            <person name="Gnad F."/>
            <person name="Cox J."/>
            <person name="Jensen T.S."/>
            <person name="Nigg E.A."/>
            <person name="Brunak S."/>
            <person name="Mann M."/>
        </authorList>
    </citation>
    <scope>PHOSPHORYLATION [LARGE SCALE ANALYSIS] AT SER-295 AND THR-394</scope>
    <scope>IDENTIFICATION BY MASS SPECTROMETRY [LARGE SCALE ANALYSIS]</scope>
    <source>
        <tissue>Cervix carcinoma</tissue>
    </source>
</reference>
<reference key="17">
    <citation type="journal article" date="2011" name="BMC Syst. Biol.">
        <title>Initial characterization of the human central proteome.</title>
        <authorList>
            <person name="Burkard T.R."/>
            <person name="Planyavsky M."/>
            <person name="Kaupe I."/>
            <person name="Breitwieser F.P."/>
            <person name="Buerckstuemmer T."/>
            <person name="Bennett K.L."/>
            <person name="Superti-Furga G."/>
            <person name="Colinge J."/>
        </authorList>
    </citation>
    <scope>IDENTIFICATION BY MASS SPECTROMETRY [LARGE SCALE ANALYSIS]</scope>
</reference>
<reference key="18">
    <citation type="journal article" date="2011" name="Sci. Signal.">
        <title>System-wide temporal characterization of the proteome and phosphoproteome of human embryonic stem cell differentiation.</title>
        <authorList>
            <person name="Rigbolt K.T."/>
            <person name="Prokhorova T.A."/>
            <person name="Akimov V."/>
            <person name="Henningsen J."/>
            <person name="Johansen P.T."/>
            <person name="Kratchmarova I."/>
            <person name="Kassem M."/>
            <person name="Mann M."/>
            <person name="Olsen J.V."/>
            <person name="Blagoev B."/>
        </authorList>
    </citation>
    <scope>PHOSPHORYLATION [LARGE SCALE ANALYSIS] AT THR-394 AND THR-396</scope>
    <scope>IDENTIFICATION BY MASS SPECTROMETRY [LARGE SCALE ANALYSIS]</scope>
</reference>
<reference key="19">
    <citation type="journal article" date="2012" name="Proc. Natl. Acad. Sci. U.S.A.">
        <title>Structural basis for the allosteric inhibitory mechanism of human kidney-type glutaminase (KGA) and its regulation by Raf-Mek-Erk signaling in cancer cell metabolism.</title>
        <authorList>
            <person name="Thangavelu K."/>
            <person name="Pan C.Q."/>
            <person name="Karlberg T."/>
            <person name="Balaji G."/>
            <person name="Uttamchandani M."/>
            <person name="Suresh V."/>
            <person name="Schuler H."/>
            <person name="Low B.C."/>
            <person name="Sivaraman J."/>
        </authorList>
    </citation>
    <scope>INTERACTION WITH GLS</scope>
</reference>
<reference key="20">
    <citation type="journal article" date="2013" name="J. Proteome Res.">
        <title>Toward a comprehensive characterization of a human cancer cell phosphoproteome.</title>
        <authorList>
            <person name="Zhou H."/>
            <person name="Di Palma S."/>
            <person name="Preisinger C."/>
            <person name="Peng M."/>
            <person name="Polat A.N."/>
            <person name="Heck A.J."/>
            <person name="Mohammed S."/>
        </authorList>
    </citation>
    <scope>PHOSPHORYLATION [LARGE SCALE ANALYSIS] AT THR-394 AND THR-396</scope>
    <scope>IDENTIFICATION BY MASS SPECTROMETRY [LARGE SCALE ANALYSIS]</scope>
    <source>
        <tissue>Cervix carcinoma</tissue>
        <tissue>Erythroleukemia</tissue>
    </source>
</reference>
<reference key="21">
    <citation type="journal article" date="2014" name="J. Proteomics">
        <title>An enzyme assisted RP-RPLC approach for in-depth analysis of human liver phosphoproteome.</title>
        <authorList>
            <person name="Bian Y."/>
            <person name="Song C."/>
            <person name="Cheng K."/>
            <person name="Dong M."/>
            <person name="Wang F."/>
            <person name="Huang J."/>
            <person name="Sun D."/>
            <person name="Wang L."/>
            <person name="Ye M."/>
            <person name="Zou H."/>
        </authorList>
    </citation>
    <scope>PHOSPHORYLATION [LARGE SCALE ANALYSIS] AT SER-23 AND THR-396</scope>
    <scope>IDENTIFICATION BY MASS SPECTROMETRY [LARGE SCALE ANALYSIS]</scope>
    <source>
        <tissue>Liver</tissue>
    </source>
</reference>
<reference key="22">
    <citation type="journal article" date="2018" name="Nature">
        <title>MEK drives BRAF activation through allosteric control of KSR proteins.</title>
        <authorList>
            <person name="Lavoie H."/>
            <person name="Sahmi M."/>
            <person name="Maisonneuve P."/>
            <person name="Marullo S.A."/>
            <person name="Thevakumaran N."/>
            <person name="Jin T."/>
            <person name="Kurinov I."/>
            <person name="Sicheri F."/>
            <person name="Therrien M."/>
        </authorList>
    </citation>
    <scope>FUNCTION</scope>
    <scope>INTERACTION WITH BRAF AND KSR1</scope>
</reference>
<reference key="23">
    <citation type="journal article" date="2006" name="Science">
        <title>Germline mutations in genes within the MAPK pathway cause cardio-facio-cutaneous syndrome.</title>
        <authorList>
            <person name="Rodriguez-Viciana P."/>
            <person name="Tetsu O."/>
            <person name="Tidyman W.E."/>
            <person name="Estep A.L."/>
            <person name="Conger B.A."/>
            <person name="Cruz M.S."/>
            <person name="McCormick F."/>
            <person name="Rauen K.A."/>
        </authorList>
    </citation>
    <scope>VARIANT CFC4 CYS-57</scope>
</reference>
<reference key="24">
    <citation type="journal article" date="2008" name="Clin. Genet.">
        <title>Mutation and phenotypic spectrum in patients with cardio-facio-cutaneous and Costello syndrome.</title>
        <authorList>
            <person name="Schulz A.L."/>
            <person name="Albrecht B."/>
            <person name="Arici C."/>
            <person name="van der Burgt I."/>
            <person name="Buske A."/>
            <person name="Gillessen-Kaesbach G."/>
            <person name="Heller R."/>
            <person name="Horn D."/>
            <person name="Hubner C.A."/>
            <person name="Korenke G.C."/>
            <person name="Konig R."/>
            <person name="Kress W."/>
            <person name="Kruger G."/>
            <person name="Meinecke P."/>
            <person name="Mucke J."/>
            <person name="Plecko B."/>
            <person name="Rossier E."/>
            <person name="Schinzel A."/>
            <person name="Schulze A."/>
            <person name="Seemanova E."/>
            <person name="Seidel H."/>
            <person name="Spranger S."/>
            <person name="Tuysuz B."/>
            <person name="Uhrig S."/>
            <person name="Wieczorek D."/>
            <person name="Kutsche K."/>
            <person name="Zenker M."/>
        </authorList>
    </citation>
    <scope>VARIANTS CFC4 VAL-57 AND HIS-134</scope>
</reference>
<reference key="25">
    <citation type="journal article" date="2010" name="Am. J. Med. Genet. A">
        <title>Molecular and functional analysis of a novel MEK2 mutation in cardio-facio-cutaneous syndrome: transmission through four generations.</title>
        <authorList>
            <person name="Rauen K.A."/>
            <person name="Tidyman W.E."/>
            <person name="Estep A.L."/>
            <person name="Sampath S."/>
            <person name="Peltier H.M."/>
            <person name="Bale S.J."/>
            <person name="Lacassie Y."/>
        </authorList>
    </citation>
    <scope>VARIANT CFC4 GLN-128</scope>
    <scope>CHARACTERIZATION OF VARIANT CFC4 GLN-128</scope>
</reference>
<organism>
    <name type="scientific">Homo sapiens</name>
    <name type="common">Human</name>
    <dbReference type="NCBI Taxonomy" id="9606"/>
    <lineage>
        <taxon>Eukaryota</taxon>
        <taxon>Metazoa</taxon>
        <taxon>Chordata</taxon>
        <taxon>Craniata</taxon>
        <taxon>Vertebrata</taxon>
        <taxon>Euteleostomi</taxon>
        <taxon>Mammalia</taxon>
        <taxon>Eutheria</taxon>
        <taxon>Euarchontoglires</taxon>
        <taxon>Primates</taxon>
        <taxon>Haplorrhini</taxon>
        <taxon>Catarrhini</taxon>
        <taxon>Hominidae</taxon>
        <taxon>Homo</taxon>
    </lineage>
</organism>
<feature type="chain" id="PRO_0000086372" description="Dual specificity mitogen-activated protein kinase kinase 2">
    <location>
        <begin position="1"/>
        <end position="400"/>
    </location>
</feature>
<feature type="domain" description="Protein kinase" evidence="4">
    <location>
        <begin position="72"/>
        <end position="369"/>
    </location>
</feature>
<feature type="region of interest" description="Disordered" evidence="6">
    <location>
        <begin position="286"/>
        <end position="310"/>
    </location>
</feature>
<feature type="active site" description="Proton acceptor" evidence="4 5">
    <location>
        <position position="194"/>
    </location>
</feature>
<feature type="binding site" evidence="4">
    <location>
        <begin position="78"/>
        <end position="86"/>
    </location>
    <ligand>
        <name>ATP</name>
        <dbReference type="ChEBI" id="CHEBI:30616"/>
    </ligand>
</feature>
<feature type="binding site" evidence="4">
    <location>
        <position position="101"/>
    </location>
    <ligand>
        <name>ATP</name>
        <dbReference type="ChEBI" id="CHEBI:30616"/>
    </ligand>
</feature>
<feature type="site" description="Cleavage; by anthrax lethal factor">
    <location>
        <begin position="10"/>
        <end position="11"/>
    </location>
</feature>
<feature type="modified residue" description="N-acetylmethionine" evidence="19">
    <location>
        <position position="1"/>
    </location>
</feature>
<feature type="modified residue" description="Phosphoserine" evidence="23">
    <location>
        <position position="23"/>
    </location>
</feature>
<feature type="modified residue" description="(Microbial infection) O-acetylserine; by Yersinia YopJ; alternate" evidence="9">
    <location>
        <position position="222"/>
    </location>
</feature>
<feature type="modified residue" description="Phosphoserine; by RAF; alternate" evidence="7 9">
    <location>
        <position position="222"/>
    </location>
</feature>
<feature type="modified residue" description="(Microbial infection) O-acetylserine; by Yersinia YopJ; alternate" evidence="9">
    <location>
        <position position="226"/>
    </location>
</feature>
<feature type="modified residue" description="Phosphoserine; alternate" evidence="9">
    <location>
        <position position="226"/>
    </location>
</feature>
<feature type="modified residue" description="Phosphoserine" evidence="18">
    <location>
        <position position="293"/>
    </location>
</feature>
<feature type="modified residue" description="Phosphoserine" evidence="18 20">
    <location>
        <position position="295"/>
    </location>
</feature>
<feature type="modified residue" description="Phosphoserine" evidence="2">
    <location>
        <position position="306"/>
    </location>
</feature>
<feature type="modified residue" description="Phosphothreonine" evidence="15 17 20 21 22">
    <location>
        <position position="394"/>
    </location>
</feature>
<feature type="modified residue" description="Phosphothreonine" evidence="17 21 22 23">
    <location>
        <position position="396"/>
    </location>
</feature>
<feature type="sequence variant" id="VAR_035095" description="In CFC4; dbSNP:rs121434497." evidence="8">
    <original>F</original>
    <variation>C</variation>
    <location>
        <position position="57"/>
    </location>
</feature>
<feature type="sequence variant" id="VAR_069781" description="In CFC4; dbSNP:rs121434498." evidence="10">
    <original>F</original>
    <variation>V</variation>
    <location>
        <position position="57"/>
    </location>
</feature>
<feature type="sequence variant" id="VAR_069782" description="In CFC4; results in increased kinase activity; dbSNP:rs267607230." evidence="12">
    <original>P</original>
    <variation>Q</variation>
    <location>
        <position position="128"/>
    </location>
</feature>
<feature type="sequence variant" id="VAR_069783" description="In CFC4; dbSNP:rs121434499." evidence="10">
    <original>Y</original>
    <variation>H</variation>
    <location>
        <position position="134"/>
    </location>
</feature>
<feature type="sequence conflict" description="In Ref. 6; AA sequence." evidence="16" ref="6">
    <original>A</original>
    <variation>R</variation>
    <location>
        <position position="56"/>
    </location>
</feature>
<feature type="helix" evidence="24">
    <location>
        <begin position="69"/>
        <end position="71"/>
    </location>
</feature>
<feature type="strand" evidence="24">
    <location>
        <begin position="72"/>
        <end position="80"/>
    </location>
</feature>
<feature type="strand" evidence="24">
    <location>
        <begin position="85"/>
        <end position="91"/>
    </location>
</feature>
<feature type="turn" evidence="24">
    <location>
        <begin position="92"/>
        <end position="94"/>
    </location>
</feature>
<feature type="strand" evidence="24">
    <location>
        <begin position="97"/>
        <end position="103"/>
    </location>
</feature>
<feature type="helix" evidence="24">
    <location>
        <begin position="110"/>
        <end position="119"/>
    </location>
</feature>
<feature type="helix" evidence="24">
    <location>
        <begin position="120"/>
        <end position="122"/>
    </location>
</feature>
<feature type="strand" evidence="24">
    <location>
        <begin position="133"/>
        <end position="148"/>
    </location>
</feature>
<feature type="helix" evidence="24">
    <location>
        <begin position="155"/>
        <end position="161"/>
    </location>
</feature>
<feature type="strand" evidence="24">
    <location>
        <begin position="162"/>
        <end position="164"/>
    </location>
</feature>
<feature type="helix" evidence="24">
    <location>
        <begin position="167"/>
        <end position="186"/>
    </location>
</feature>
<feature type="helix" evidence="24">
    <location>
        <begin position="197"/>
        <end position="199"/>
    </location>
</feature>
<feature type="strand" evidence="24">
    <location>
        <begin position="200"/>
        <end position="202"/>
    </location>
</feature>
<feature type="strand" evidence="24">
    <location>
        <begin position="208"/>
        <end position="210"/>
    </location>
</feature>
<feature type="helix" evidence="24">
    <location>
        <begin position="217"/>
        <end position="222"/>
    </location>
</feature>
<feature type="helix" evidence="24">
    <location>
        <begin position="236"/>
        <end position="239"/>
    </location>
</feature>
<feature type="helix" evidence="24">
    <location>
        <begin position="246"/>
        <end position="262"/>
    </location>
</feature>
<feature type="helix" evidence="24">
    <location>
        <begin position="272"/>
        <end position="279"/>
    </location>
</feature>
<feature type="helix" evidence="24">
    <location>
        <begin position="318"/>
        <end position="327"/>
    </location>
</feature>
<feature type="turn" evidence="24">
    <location>
        <begin position="335"/>
        <end position="337"/>
    </location>
</feature>
<feature type="helix" evidence="24">
    <location>
        <begin position="340"/>
        <end position="349"/>
    </location>
</feature>
<feature type="turn" evidence="24">
    <location>
        <begin position="354"/>
        <end position="356"/>
    </location>
</feature>
<feature type="helix" evidence="24">
    <location>
        <begin position="360"/>
        <end position="364"/>
    </location>
</feature>
<feature type="helix" evidence="24">
    <location>
        <begin position="367"/>
        <end position="374"/>
    </location>
</feature>
<feature type="helix" evidence="24">
    <location>
        <begin position="379"/>
        <end position="386"/>
    </location>
</feature>